<organism>
    <name type="scientific">Eremothecium gossypii (strain ATCC 10895 / CBS 109.51 / FGSC 9923 / NRRL Y-1056)</name>
    <name type="common">Yeast</name>
    <name type="synonym">Ashbya gossypii</name>
    <dbReference type="NCBI Taxonomy" id="284811"/>
    <lineage>
        <taxon>Eukaryota</taxon>
        <taxon>Fungi</taxon>
        <taxon>Dikarya</taxon>
        <taxon>Ascomycota</taxon>
        <taxon>Saccharomycotina</taxon>
        <taxon>Saccharomycetes</taxon>
        <taxon>Saccharomycetales</taxon>
        <taxon>Saccharomycetaceae</taxon>
        <taxon>Eremothecium</taxon>
    </lineage>
</organism>
<accession>Q750A9</accession>
<feature type="chain" id="PRO_0000186327" description="Mitogen-activated protein kinase HOG1">
    <location>
        <begin position="1"/>
        <end position="447"/>
    </location>
</feature>
<feature type="domain" description="Protein kinase" evidence="5">
    <location>
        <begin position="23"/>
        <end position="302"/>
    </location>
</feature>
<feature type="region of interest" description="Disordered" evidence="7">
    <location>
        <begin position="373"/>
        <end position="404"/>
    </location>
</feature>
<feature type="short sequence motif" description="TXY">
    <location>
        <begin position="174"/>
        <end position="176"/>
    </location>
</feature>
<feature type="compositionally biased region" description="Low complexity" evidence="7">
    <location>
        <begin position="373"/>
        <end position="389"/>
    </location>
</feature>
<feature type="active site" description="Proton acceptor" evidence="5 6">
    <location>
        <position position="144"/>
    </location>
</feature>
<feature type="binding site" evidence="5">
    <location>
        <begin position="29"/>
        <end position="37"/>
    </location>
    <ligand>
        <name>ATP</name>
        <dbReference type="ChEBI" id="CHEBI:30616"/>
    </ligand>
</feature>
<feature type="binding site" evidence="5">
    <location>
        <position position="52"/>
    </location>
    <ligand>
        <name>ATP</name>
        <dbReference type="ChEBI" id="CHEBI:30616"/>
    </ligand>
</feature>
<feature type="modified residue" description="Phosphothreonine" evidence="1">
    <location>
        <position position="174"/>
    </location>
</feature>
<feature type="modified residue" description="Phosphotyrosine" evidence="1">
    <location>
        <position position="176"/>
    </location>
</feature>
<gene>
    <name type="primary">HOG1</name>
    <name type="ordered locus">AGR048C</name>
</gene>
<evidence type="ECO:0000250" key="1"/>
<evidence type="ECO:0000250" key="2">
    <source>
        <dbReference type="UniProtKB" id="P32485"/>
    </source>
</evidence>
<evidence type="ECO:0000250" key="3">
    <source>
        <dbReference type="UniProtKB" id="Q16539"/>
    </source>
</evidence>
<evidence type="ECO:0000250" key="4">
    <source>
        <dbReference type="UniProtKB" id="Q4WSF6"/>
    </source>
</evidence>
<evidence type="ECO:0000255" key="5">
    <source>
        <dbReference type="PROSITE-ProRule" id="PRU00159"/>
    </source>
</evidence>
<evidence type="ECO:0000255" key="6">
    <source>
        <dbReference type="PROSITE-ProRule" id="PRU10027"/>
    </source>
</evidence>
<evidence type="ECO:0000256" key="7">
    <source>
        <dbReference type="SAM" id="MobiDB-lite"/>
    </source>
</evidence>
<evidence type="ECO:0000305" key="8"/>
<dbReference type="EC" id="2.7.11.24" evidence="2"/>
<dbReference type="EMBL" id="AE016820">
    <property type="protein sequence ID" value="AAS54537.1"/>
    <property type="status" value="ALT_INIT"/>
    <property type="molecule type" value="Genomic_DNA"/>
</dbReference>
<dbReference type="RefSeq" id="NP_986713.1">
    <property type="nucleotide sequence ID" value="NM_211775.1"/>
</dbReference>
<dbReference type="SMR" id="Q750A9"/>
<dbReference type="FunCoup" id="Q750A9">
    <property type="interactions" value="763"/>
</dbReference>
<dbReference type="STRING" id="284811.Q750A9"/>
<dbReference type="GeneID" id="4623013"/>
<dbReference type="KEGG" id="ago:AGOS_AGR048C"/>
<dbReference type="eggNOG" id="KOG0660">
    <property type="taxonomic scope" value="Eukaryota"/>
</dbReference>
<dbReference type="InParanoid" id="Q750A9"/>
<dbReference type="OrthoDB" id="192887at2759"/>
<dbReference type="Proteomes" id="UP000000591">
    <property type="component" value="Chromosome VII"/>
</dbReference>
<dbReference type="GO" id="GO:0005737">
    <property type="term" value="C:cytoplasm"/>
    <property type="evidence" value="ECO:0000318"/>
    <property type="project" value="GO_Central"/>
</dbReference>
<dbReference type="GO" id="GO:0005634">
    <property type="term" value="C:nucleus"/>
    <property type="evidence" value="ECO:0000318"/>
    <property type="project" value="GO_Central"/>
</dbReference>
<dbReference type="GO" id="GO:0005524">
    <property type="term" value="F:ATP binding"/>
    <property type="evidence" value="ECO:0007669"/>
    <property type="project" value="UniProtKB-KW"/>
</dbReference>
<dbReference type="GO" id="GO:0004707">
    <property type="term" value="F:MAP kinase activity"/>
    <property type="evidence" value="ECO:0007669"/>
    <property type="project" value="UniProtKB-EC"/>
</dbReference>
<dbReference type="GO" id="GO:0106310">
    <property type="term" value="F:protein serine kinase activity"/>
    <property type="evidence" value="ECO:0007669"/>
    <property type="project" value="RHEA"/>
</dbReference>
<dbReference type="GO" id="GO:0004674">
    <property type="term" value="F:protein serine/threonine kinase activity"/>
    <property type="evidence" value="ECO:0000318"/>
    <property type="project" value="GO_Central"/>
</dbReference>
<dbReference type="GO" id="GO:0034599">
    <property type="term" value="P:cellular response to oxidative stress"/>
    <property type="evidence" value="ECO:0000318"/>
    <property type="project" value="GO_Central"/>
</dbReference>
<dbReference type="GO" id="GO:0007231">
    <property type="term" value="P:osmosensory signaling pathway"/>
    <property type="evidence" value="ECO:0000318"/>
    <property type="project" value="GO_Central"/>
</dbReference>
<dbReference type="GO" id="GO:0051403">
    <property type="term" value="P:stress-activated MAPK cascade"/>
    <property type="evidence" value="ECO:0000318"/>
    <property type="project" value="GO_Central"/>
</dbReference>
<dbReference type="CDD" id="cd07856">
    <property type="entry name" value="STKc_Sty1_Hog1"/>
    <property type="match status" value="1"/>
</dbReference>
<dbReference type="FunFam" id="1.10.510.10:FF:000049">
    <property type="entry name" value="Mitogen-activated protein kinase"/>
    <property type="match status" value="1"/>
</dbReference>
<dbReference type="FunFam" id="3.30.200.20:FF:000050">
    <property type="entry name" value="Mitogen-activated protein kinase"/>
    <property type="match status" value="1"/>
</dbReference>
<dbReference type="Gene3D" id="3.30.200.20">
    <property type="entry name" value="Phosphorylase Kinase, domain 1"/>
    <property type="match status" value="1"/>
</dbReference>
<dbReference type="Gene3D" id="1.10.510.10">
    <property type="entry name" value="Transferase(Phosphotransferase) domain 1"/>
    <property type="match status" value="1"/>
</dbReference>
<dbReference type="InterPro" id="IPR011009">
    <property type="entry name" value="Kinase-like_dom_sf"/>
</dbReference>
<dbReference type="InterPro" id="IPR050117">
    <property type="entry name" value="MAP_kinase"/>
</dbReference>
<dbReference type="InterPro" id="IPR003527">
    <property type="entry name" value="MAP_kinase_CS"/>
</dbReference>
<dbReference type="InterPro" id="IPR008352">
    <property type="entry name" value="MAPK_p38-like"/>
</dbReference>
<dbReference type="InterPro" id="IPR038783">
    <property type="entry name" value="MAPK_Sty1/Hog1"/>
</dbReference>
<dbReference type="InterPro" id="IPR000719">
    <property type="entry name" value="Prot_kinase_dom"/>
</dbReference>
<dbReference type="InterPro" id="IPR017441">
    <property type="entry name" value="Protein_kinase_ATP_BS"/>
</dbReference>
<dbReference type="InterPro" id="IPR008271">
    <property type="entry name" value="Ser/Thr_kinase_AS"/>
</dbReference>
<dbReference type="PANTHER" id="PTHR24055">
    <property type="entry name" value="MITOGEN-ACTIVATED PROTEIN KINASE"/>
    <property type="match status" value="1"/>
</dbReference>
<dbReference type="Pfam" id="PF00069">
    <property type="entry name" value="Pkinase"/>
    <property type="match status" value="1"/>
</dbReference>
<dbReference type="PRINTS" id="PR01773">
    <property type="entry name" value="P38MAPKINASE"/>
</dbReference>
<dbReference type="SMART" id="SM00220">
    <property type="entry name" value="S_TKc"/>
    <property type="match status" value="1"/>
</dbReference>
<dbReference type="SUPFAM" id="SSF56112">
    <property type="entry name" value="Protein kinase-like (PK-like)"/>
    <property type="match status" value="1"/>
</dbReference>
<dbReference type="PROSITE" id="PS01351">
    <property type="entry name" value="MAPK"/>
    <property type="match status" value="1"/>
</dbReference>
<dbReference type="PROSITE" id="PS00107">
    <property type="entry name" value="PROTEIN_KINASE_ATP"/>
    <property type="match status" value="1"/>
</dbReference>
<dbReference type="PROSITE" id="PS50011">
    <property type="entry name" value="PROTEIN_KINASE_DOM"/>
    <property type="match status" value="1"/>
</dbReference>
<dbReference type="PROSITE" id="PS00108">
    <property type="entry name" value="PROTEIN_KINASE_ST"/>
    <property type="match status" value="1"/>
</dbReference>
<comment type="function">
    <text evidence="4">Proline-directed serine/threonine-protein kinase involved in a signal transduction pathway that is activated by changes in the osmolarity of the extracellular environment. Controls osmotic regulation of transcription of target genes.</text>
</comment>
<comment type="catalytic activity">
    <reaction evidence="2">
        <text>L-seryl-[protein] + ATP = O-phospho-L-seryl-[protein] + ADP + H(+)</text>
        <dbReference type="Rhea" id="RHEA:17989"/>
        <dbReference type="Rhea" id="RHEA-COMP:9863"/>
        <dbReference type="Rhea" id="RHEA-COMP:11604"/>
        <dbReference type="ChEBI" id="CHEBI:15378"/>
        <dbReference type="ChEBI" id="CHEBI:29999"/>
        <dbReference type="ChEBI" id="CHEBI:30616"/>
        <dbReference type="ChEBI" id="CHEBI:83421"/>
        <dbReference type="ChEBI" id="CHEBI:456216"/>
        <dbReference type="EC" id="2.7.11.24"/>
    </reaction>
    <physiologicalReaction direction="left-to-right" evidence="2">
        <dbReference type="Rhea" id="RHEA:17990"/>
    </physiologicalReaction>
</comment>
<comment type="catalytic activity">
    <reaction evidence="2">
        <text>L-threonyl-[protein] + ATP = O-phospho-L-threonyl-[protein] + ADP + H(+)</text>
        <dbReference type="Rhea" id="RHEA:46608"/>
        <dbReference type="Rhea" id="RHEA-COMP:11060"/>
        <dbReference type="Rhea" id="RHEA-COMP:11605"/>
        <dbReference type="ChEBI" id="CHEBI:15378"/>
        <dbReference type="ChEBI" id="CHEBI:30013"/>
        <dbReference type="ChEBI" id="CHEBI:30616"/>
        <dbReference type="ChEBI" id="CHEBI:61977"/>
        <dbReference type="ChEBI" id="CHEBI:456216"/>
        <dbReference type="EC" id="2.7.11.24"/>
    </reaction>
    <physiologicalReaction direction="left-to-right" evidence="2">
        <dbReference type="Rhea" id="RHEA:46609"/>
    </physiologicalReaction>
</comment>
<comment type="cofactor">
    <cofactor evidence="3">
        <name>Mg(2+)</name>
        <dbReference type="ChEBI" id="CHEBI:18420"/>
    </cofactor>
</comment>
<comment type="activity regulation">
    <text evidence="1">Activated by tyrosine and threonine phosphorylation.</text>
</comment>
<comment type="subcellular location">
    <subcellularLocation>
        <location evidence="1">Cytoplasm</location>
    </subcellularLocation>
    <subcellularLocation>
        <location evidence="1">Nucleus</location>
    </subcellularLocation>
</comment>
<comment type="domain">
    <text>The TXY motif contains the threonine and tyrosine residues whose phosphorylation activates the MAP kinases.</text>
</comment>
<comment type="PTM">
    <text evidence="1">Dually phosphorylated on Thr-174 and Tyr-176, which activates the enzyme.</text>
</comment>
<comment type="similarity">
    <text evidence="5">Belongs to the protein kinase superfamily. Ser/Thr protein kinase family. MAP kinase subfamily. HOG1 sub-subfamily.</text>
</comment>
<comment type="sequence caution" evidence="8">
    <conflict type="erroneous initiation">
        <sequence resource="EMBL-CDS" id="AAS54537"/>
    </conflict>
</comment>
<reference key="1">
    <citation type="journal article" date="2004" name="Science">
        <title>The Ashbya gossypii genome as a tool for mapping the ancient Saccharomyces cerevisiae genome.</title>
        <authorList>
            <person name="Dietrich F.S."/>
            <person name="Voegeli S."/>
            <person name="Brachat S."/>
            <person name="Lerch A."/>
            <person name="Gates K."/>
            <person name="Steiner S."/>
            <person name="Mohr C."/>
            <person name="Poehlmann R."/>
            <person name="Luedi P."/>
            <person name="Choi S."/>
            <person name="Wing R.A."/>
            <person name="Flavier A."/>
            <person name="Gaffney T.D."/>
            <person name="Philippsen P."/>
        </authorList>
    </citation>
    <scope>NUCLEOTIDE SEQUENCE [LARGE SCALE GENOMIC DNA]</scope>
    <source>
        <strain>ATCC 10895 / CBS 109.51 / FGSC 9923 / NRRL Y-1056</strain>
    </source>
</reference>
<reference key="2">
    <citation type="journal article" date="2013" name="G3 (Bethesda)">
        <title>Genomes of Ashbya fungi isolated from insects reveal four mating-type loci, numerous translocations, lack of transposons, and distinct gene duplications.</title>
        <authorList>
            <person name="Dietrich F.S."/>
            <person name="Voegeli S."/>
            <person name="Kuo S."/>
            <person name="Philippsen P."/>
        </authorList>
    </citation>
    <scope>GENOME REANNOTATION</scope>
    <source>
        <strain>ATCC 10895 / CBS 109.51 / FGSC 9923 / NRRL Y-1056</strain>
    </source>
</reference>
<name>HOG1_EREGS</name>
<sequence length="447" mass="50872">MASQEEFYRTQIFGTVFEITNRYADLNPVGMGAFGLVCSAVDTYTQQPVAIKKIMKPFSTAVLAKRTYRELKLLKHLRHENLICLEDIFLSPLEDIYFVTELQGTDLHRLLQTRPLEKQFLQYFLYQILRGLKYVHSAGVIHRDLKPSNILINENCDLKICDFGLARIQDPQMTGYVSTRYYRAPEIMLTWQKYNVEVDIWSAGCIFAEMIEGKPLFPGKDHVHQFSIITDLLGSPPKDVIDTICSENTLKFVTSLPHRDPVPFTERFKNLKPDAVDLLEKMLVFDPKKRITAGDALTHPYLAPYHDPTDEPVADAKFDWNFNDADLPVDTWRVMMYSEILDFHQVPDSQINPNDTFDDQVAAATAAAEAARQQQQQKQQQQKQQQQRHQGVEHGAQHVQLQHGAKQLSADPLVGDSNGGIPLNVSAANETLNNFANQAAQYATDFE</sequence>
<keyword id="KW-0010">Activator</keyword>
<keyword id="KW-0067">ATP-binding</keyword>
<keyword id="KW-0963">Cytoplasm</keyword>
<keyword id="KW-0418">Kinase</keyword>
<keyword id="KW-0547">Nucleotide-binding</keyword>
<keyword id="KW-0539">Nucleus</keyword>
<keyword id="KW-0597">Phosphoprotein</keyword>
<keyword id="KW-1185">Reference proteome</keyword>
<keyword id="KW-0723">Serine/threonine-protein kinase</keyword>
<keyword id="KW-0804">Transcription</keyword>
<keyword id="KW-0805">Transcription regulation</keyword>
<keyword id="KW-0808">Transferase</keyword>
<protein>
    <recommendedName>
        <fullName>Mitogen-activated protein kinase HOG1</fullName>
        <shortName>MAP kinase HOG1</shortName>
        <ecNumber evidence="2">2.7.11.24</ecNumber>
    </recommendedName>
</protein>
<proteinExistence type="inferred from homology"/>